<organism>
    <name type="scientific">Listeria welshimeri serovar 6b (strain ATCC 35897 / DSM 20650 / CCUG 15529 / CIP 8149 / NCTC 11857 / SLCC 5334 / V8)</name>
    <dbReference type="NCBI Taxonomy" id="386043"/>
    <lineage>
        <taxon>Bacteria</taxon>
        <taxon>Bacillati</taxon>
        <taxon>Bacillota</taxon>
        <taxon>Bacilli</taxon>
        <taxon>Bacillales</taxon>
        <taxon>Listeriaceae</taxon>
        <taxon>Listeria</taxon>
    </lineage>
</organism>
<name>RL7_LISW6</name>
<gene>
    <name evidence="1" type="primary">rplL</name>
    <name type="ordered locus">lwe0214</name>
</gene>
<sequence>MALNIEEIIASVKEASVLELNDLVKAIEEEFGVTAAAPVAVAAAGGGAAEQTEFTVELSSAGDSKIKVIKVVREITGLGLKEAKELVDNAPKALKEGVAKEEAEEIKAKLEEVGANVEVK</sequence>
<keyword id="KW-0687">Ribonucleoprotein</keyword>
<keyword id="KW-0689">Ribosomal protein</keyword>
<reference key="1">
    <citation type="journal article" date="2006" name="J. Bacteriol.">
        <title>Whole-genome sequence of Listeria welshimeri reveals common steps in genome reduction with Listeria innocua as compared to Listeria monocytogenes.</title>
        <authorList>
            <person name="Hain T."/>
            <person name="Steinweg C."/>
            <person name="Kuenne C.T."/>
            <person name="Billion A."/>
            <person name="Ghai R."/>
            <person name="Chatterjee S.S."/>
            <person name="Domann E."/>
            <person name="Kaerst U."/>
            <person name="Goesmann A."/>
            <person name="Bekel T."/>
            <person name="Bartels D."/>
            <person name="Kaiser O."/>
            <person name="Meyer F."/>
            <person name="Puehler A."/>
            <person name="Weisshaar B."/>
            <person name="Wehland J."/>
            <person name="Liang C."/>
            <person name="Dandekar T."/>
            <person name="Lampidis R."/>
            <person name="Kreft J."/>
            <person name="Goebel W."/>
            <person name="Chakraborty T."/>
        </authorList>
    </citation>
    <scope>NUCLEOTIDE SEQUENCE [LARGE SCALE GENOMIC DNA]</scope>
    <source>
        <strain>ATCC 35897 / DSM 20650 / CCUG 15529 / CIP 8149 / NCTC 11857 / SLCC 5334 / V8</strain>
    </source>
</reference>
<proteinExistence type="inferred from homology"/>
<comment type="function">
    <text evidence="1">Forms part of the ribosomal stalk which helps the ribosome interact with GTP-bound translation factors. Is thus essential for accurate translation.</text>
</comment>
<comment type="subunit">
    <text evidence="1">Homodimer. Part of the ribosomal stalk of the 50S ribosomal subunit. Forms a multimeric L10(L12)X complex, where L10 forms an elongated spine to which 2 to 4 L12 dimers bind in a sequential fashion. Binds GTP-bound translation factors.</text>
</comment>
<comment type="similarity">
    <text evidence="1">Belongs to the bacterial ribosomal protein bL12 family.</text>
</comment>
<protein>
    <recommendedName>
        <fullName evidence="1">Large ribosomal subunit protein bL12</fullName>
    </recommendedName>
    <alternativeName>
        <fullName evidence="2">50S ribosomal protein L7/L12</fullName>
    </alternativeName>
</protein>
<evidence type="ECO:0000255" key="1">
    <source>
        <dbReference type="HAMAP-Rule" id="MF_00368"/>
    </source>
</evidence>
<evidence type="ECO:0000305" key="2"/>
<feature type="chain" id="PRO_1000007035" description="Large ribosomal subunit protein bL12">
    <location>
        <begin position="1"/>
        <end position="120"/>
    </location>
</feature>
<accession>A0AF50</accession>
<dbReference type="EMBL" id="AM263198">
    <property type="protein sequence ID" value="CAK19632.1"/>
    <property type="molecule type" value="Genomic_DNA"/>
</dbReference>
<dbReference type="RefSeq" id="WP_011701073.1">
    <property type="nucleotide sequence ID" value="NC_008555.1"/>
</dbReference>
<dbReference type="SMR" id="A0AF50"/>
<dbReference type="STRING" id="386043.lwe0214"/>
<dbReference type="GeneID" id="61188107"/>
<dbReference type="KEGG" id="lwe:lwe0214"/>
<dbReference type="eggNOG" id="COG0222">
    <property type="taxonomic scope" value="Bacteria"/>
</dbReference>
<dbReference type="HOGENOM" id="CLU_086499_3_2_9"/>
<dbReference type="OrthoDB" id="9811748at2"/>
<dbReference type="Proteomes" id="UP000000779">
    <property type="component" value="Chromosome"/>
</dbReference>
<dbReference type="GO" id="GO:0022625">
    <property type="term" value="C:cytosolic large ribosomal subunit"/>
    <property type="evidence" value="ECO:0007669"/>
    <property type="project" value="TreeGrafter"/>
</dbReference>
<dbReference type="GO" id="GO:0003729">
    <property type="term" value="F:mRNA binding"/>
    <property type="evidence" value="ECO:0007669"/>
    <property type="project" value="TreeGrafter"/>
</dbReference>
<dbReference type="GO" id="GO:0003735">
    <property type="term" value="F:structural constituent of ribosome"/>
    <property type="evidence" value="ECO:0007669"/>
    <property type="project" value="InterPro"/>
</dbReference>
<dbReference type="GO" id="GO:0006412">
    <property type="term" value="P:translation"/>
    <property type="evidence" value="ECO:0007669"/>
    <property type="project" value="UniProtKB-UniRule"/>
</dbReference>
<dbReference type="CDD" id="cd00387">
    <property type="entry name" value="Ribosomal_L7_L12"/>
    <property type="match status" value="1"/>
</dbReference>
<dbReference type="FunFam" id="1.20.5.710:FF:000002">
    <property type="entry name" value="50S ribosomal protein L7/L12"/>
    <property type="match status" value="1"/>
</dbReference>
<dbReference type="FunFam" id="3.30.1390.10:FF:000001">
    <property type="entry name" value="50S ribosomal protein L7/L12"/>
    <property type="match status" value="1"/>
</dbReference>
<dbReference type="Gene3D" id="3.30.1390.10">
    <property type="match status" value="1"/>
</dbReference>
<dbReference type="Gene3D" id="1.20.5.710">
    <property type="entry name" value="Single helix bin"/>
    <property type="match status" value="1"/>
</dbReference>
<dbReference type="HAMAP" id="MF_00368">
    <property type="entry name" value="Ribosomal_bL12"/>
    <property type="match status" value="1"/>
</dbReference>
<dbReference type="InterPro" id="IPR000206">
    <property type="entry name" value="Ribosomal_bL12"/>
</dbReference>
<dbReference type="InterPro" id="IPR013823">
    <property type="entry name" value="Ribosomal_bL12_C"/>
</dbReference>
<dbReference type="InterPro" id="IPR014719">
    <property type="entry name" value="Ribosomal_bL12_C/ClpS-like"/>
</dbReference>
<dbReference type="InterPro" id="IPR008932">
    <property type="entry name" value="Ribosomal_bL12_oligo"/>
</dbReference>
<dbReference type="InterPro" id="IPR036235">
    <property type="entry name" value="Ribosomal_bL12_oligo_N_sf"/>
</dbReference>
<dbReference type="NCBIfam" id="TIGR00855">
    <property type="entry name" value="L12"/>
    <property type="match status" value="1"/>
</dbReference>
<dbReference type="PANTHER" id="PTHR45987">
    <property type="entry name" value="39S RIBOSOMAL PROTEIN L12"/>
    <property type="match status" value="1"/>
</dbReference>
<dbReference type="PANTHER" id="PTHR45987:SF4">
    <property type="entry name" value="LARGE RIBOSOMAL SUBUNIT PROTEIN BL12M"/>
    <property type="match status" value="1"/>
</dbReference>
<dbReference type="Pfam" id="PF00542">
    <property type="entry name" value="Ribosomal_L12"/>
    <property type="match status" value="1"/>
</dbReference>
<dbReference type="Pfam" id="PF16320">
    <property type="entry name" value="Ribosomal_L12_N"/>
    <property type="match status" value="1"/>
</dbReference>
<dbReference type="SUPFAM" id="SSF54736">
    <property type="entry name" value="ClpS-like"/>
    <property type="match status" value="1"/>
</dbReference>
<dbReference type="SUPFAM" id="SSF48300">
    <property type="entry name" value="Ribosomal protein L7/12, oligomerisation (N-terminal) domain"/>
    <property type="match status" value="1"/>
</dbReference>